<dbReference type="EMBL" id="J00182">
    <property type="protein sequence ID" value="AAB59406.1"/>
    <property type="molecule type" value="Genomic_DNA"/>
</dbReference>
<dbReference type="EMBL" id="M24173">
    <property type="protein sequence ID" value="AAA61306.1"/>
    <property type="molecule type" value="mRNA"/>
</dbReference>
<dbReference type="EMBL" id="Z84721">
    <property type="protein sequence ID" value="CAB06552.1"/>
    <property type="molecule type" value="Genomic_DNA"/>
</dbReference>
<dbReference type="EMBL" id="CR456848">
    <property type="protein sequence ID" value="CAG33129.1"/>
    <property type="molecule type" value="mRNA"/>
</dbReference>
<dbReference type="EMBL" id="AE006462">
    <property type="protein sequence ID" value="AAK61214.1"/>
    <property type="molecule type" value="Genomic_DNA"/>
</dbReference>
<dbReference type="EMBL" id="CH471112">
    <property type="protein sequence ID" value="EAW85864.1"/>
    <property type="molecule type" value="Genomic_DNA"/>
</dbReference>
<dbReference type="EMBL" id="BC027892">
    <property type="protein sequence ID" value="AAH27892.1"/>
    <property type="molecule type" value="mRNA"/>
</dbReference>
<dbReference type="CCDS" id="CCDS10397.1"/>
<dbReference type="PIR" id="A90832">
    <property type="entry name" value="HZHU"/>
</dbReference>
<dbReference type="RefSeq" id="NP_005323.1">
    <property type="nucleotide sequence ID" value="NM_005332.3"/>
</dbReference>
<dbReference type="RefSeq" id="XP_005255345.1">
    <property type="nucleotide sequence ID" value="XM_005255288.3"/>
</dbReference>
<dbReference type="PDB" id="1JEB">
    <property type="method" value="X-ray"/>
    <property type="resolution" value="2.10 A"/>
    <property type="chains" value="A/C=2-142"/>
</dbReference>
<dbReference type="PDB" id="3W4U">
    <property type="method" value="X-ray"/>
    <property type="resolution" value="1.95 A"/>
    <property type="chains" value="A/C/E=1-142"/>
</dbReference>
<dbReference type="PDBsum" id="1JEB"/>
<dbReference type="PDBsum" id="3W4U"/>
<dbReference type="SMR" id="P02008"/>
<dbReference type="BioGRID" id="109300">
    <property type="interactions" value="51"/>
</dbReference>
<dbReference type="ComplexPortal" id="CPX-2928">
    <property type="entry name" value="Embryonic hemoglobin Gower-1 complex"/>
</dbReference>
<dbReference type="ComplexPortal" id="CPX-2929">
    <property type="entry name" value="Hemoglobin Portland-2 complex"/>
</dbReference>
<dbReference type="ComplexPortal" id="CPX-2930">
    <property type="entry name" value="Hemoglobin Portland-1 Variant 1 complex"/>
</dbReference>
<dbReference type="ComplexPortal" id="CPX-2931">
    <property type="entry name" value="Hemoglobin Portland-1 Variant 2 complex"/>
</dbReference>
<dbReference type="FunCoup" id="P02008">
    <property type="interactions" value="85"/>
</dbReference>
<dbReference type="IntAct" id="P02008">
    <property type="interactions" value="43"/>
</dbReference>
<dbReference type="STRING" id="9606.ENSP00000252951"/>
<dbReference type="iPTMnet" id="P02008"/>
<dbReference type="PhosphoSitePlus" id="P02008"/>
<dbReference type="BioMuta" id="HBZ"/>
<dbReference type="DMDM" id="122335"/>
<dbReference type="jPOST" id="P02008"/>
<dbReference type="MassIVE" id="P02008"/>
<dbReference type="PaxDb" id="9606-ENSP00000252951"/>
<dbReference type="PeptideAtlas" id="P02008"/>
<dbReference type="ProteomicsDB" id="51514"/>
<dbReference type="Pumba" id="P02008"/>
<dbReference type="Antibodypedia" id="8877">
    <property type="antibodies" value="276 antibodies from 30 providers"/>
</dbReference>
<dbReference type="DNASU" id="3050"/>
<dbReference type="Ensembl" id="ENST00000252951.3">
    <property type="protein sequence ID" value="ENSP00000252951.2"/>
    <property type="gene ID" value="ENSG00000130656.6"/>
</dbReference>
<dbReference type="GeneID" id="3050"/>
<dbReference type="KEGG" id="hsa:3050"/>
<dbReference type="MANE-Select" id="ENST00000252951.3">
    <property type="protein sequence ID" value="ENSP00000252951.2"/>
    <property type="RefSeq nucleotide sequence ID" value="NM_005332.3"/>
    <property type="RefSeq protein sequence ID" value="NP_005323.1"/>
</dbReference>
<dbReference type="UCSC" id="uc002cft.2">
    <property type="organism name" value="human"/>
</dbReference>
<dbReference type="AGR" id="HGNC:4835"/>
<dbReference type="CTD" id="3050"/>
<dbReference type="DisGeNET" id="3050"/>
<dbReference type="GeneCards" id="HBZ"/>
<dbReference type="GeneReviews" id="HBZ"/>
<dbReference type="HGNC" id="HGNC:4835">
    <property type="gene designation" value="HBZ"/>
</dbReference>
<dbReference type="HPA" id="ENSG00000130656">
    <property type="expression patterns" value="Group enriched (bone marrow, testis)"/>
</dbReference>
<dbReference type="MalaCards" id="HBZ"/>
<dbReference type="MIM" id="142310">
    <property type="type" value="gene"/>
</dbReference>
<dbReference type="neXtProt" id="NX_P02008"/>
<dbReference type="OpenTargets" id="ENSG00000130656"/>
<dbReference type="PharmGKB" id="PA29212"/>
<dbReference type="VEuPathDB" id="HostDB:ENSG00000130656"/>
<dbReference type="eggNOG" id="KOG3378">
    <property type="taxonomic scope" value="Eukaryota"/>
</dbReference>
<dbReference type="GeneTree" id="ENSGT00940000158623"/>
<dbReference type="HOGENOM" id="CLU_003827_10_2_1"/>
<dbReference type="InParanoid" id="P02008"/>
<dbReference type="OMA" id="MVKAFWA"/>
<dbReference type="OrthoDB" id="8751793at2759"/>
<dbReference type="PAN-GO" id="P02008">
    <property type="GO annotations" value="9 GO annotations based on evolutionary models"/>
</dbReference>
<dbReference type="PhylomeDB" id="P02008"/>
<dbReference type="TreeFam" id="TF332328"/>
<dbReference type="PathwayCommons" id="P02008"/>
<dbReference type="SignaLink" id="P02008"/>
<dbReference type="BioGRID-ORCS" id="3050">
    <property type="hits" value="16 hits in 1107 CRISPR screens"/>
</dbReference>
<dbReference type="ChiTaRS" id="HBZ">
    <property type="organism name" value="human"/>
</dbReference>
<dbReference type="EvolutionaryTrace" id="P02008"/>
<dbReference type="GeneWiki" id="HBZ"/>
<dbReference type="GenomeRNAi" id="3050"/>
<dbReference type="Pharos" id="P02008">
    <property type="development level" value="Tbio"/>
</dbReference>
<dbReference type="PRO" id="PR:P02008"/>
<dbReference type="Proteomes" id="UP000005640">
    <property type="component" value="Chromosome 16"/>
</dbReference>
<dbReference type="RNAct" id="P02008">
    <property type="molecule type" value="protein"/>
</dbReference>
<dbReference type="Bgee" id="ENSG00000130656">
    <property type="expression patterns" value="Expressed in male germ line stem cell (sensu Vertebrata) in testis and 82 other cell types or tissues"/>
</dbReference>
<dbReference type="ExpressionAtlas" id="P02008">
    <property type="expression patterns" value="baseline and differential"/>
</dbReference>
<dbReference type="GO" id="GO:0070062">
    <property type="term" value="C:extracellular exosome"/>
    <property type="evidence" value="ECO:0007005"/>
    <property type="project" value="UniProtKB"/>
</dbReference>
<dbReference type="GO" id="GO:0031838">
    <property type="term" value="C:haptoglobin-hemoglobin complex"/>
    <property type="evidence" value="ECO:0000318"/>
    <property type="project" value="GO_Central"/>
</dbReference>
<dbReference type="GO" id="GO:0005833">
    <property type="term" value="C:hemoglobin complex"/>
    <property type="evidence" value="ECO:0000353"/>
    <property type="project" value="ComplexPortal"/>
</dbReference>
<dbReference type="GO" id="GO:0020037">
    <property type="term" value="F:heme binding"/>
    <property type="evidence" value="ECO:0000318"/>
    <property type="project" value="GO_Central"/>
</dbReference>
<dbReference type="GO" id="GO:0005506">
    <property type="term" value="F:iron ion binding"/>
    <property type="evidence" value="ECO:0007669"/>
    <property type="project" value="InterPro"/>
</dbReference>
<dbReference type="GO" id="GO:0019825">
    <property type="term" value="F:oxygen binding"/>
    <property type="evidence" value="ECO:0000318"/>
    <property type="project" value="GO_Central"/>
</dbReference>
<dbReference type="GO" id="GO:0005344">
    <property type="term" value="F:oxygen carrier activity"/>
    <property type="evidence" value="ECO:0000318"/>
    <property type="project" value="GO_Central"/>
</dbReference>
<dbReference type="GO" id="GO:0015670">
    <property type="term" value="P:carbon dioxide transport"/>
    <property type="evidence" value="ECO:0000303"/>
    <property type="project" value="ComplexPortal"/>
</dbReference>
<dbReference type="GO" id="GO:0098869">
    <property type="term" value="P:cellular oxidant detoxification"/>
    <property type="evidence" value="ECO:0007669"/>
    <property type="project" value="GOC"/>
</dbReference>
<dbReference type="GO" id="GO:0043249">
    <property type="term" value="P:erythrocyte maturation"/>
    <property type="evidence" value="ECO:0007669"/>
    <property type="project" value="Ensembl"/>
</dbReference>
<dbReference type="GO" id="GO:0042744">
    <property type="term" value="P:hydrogen peroxide catabolic process"/>
    <property type="evidence" value="ECO:0000318"/>
    <property type="project" value="GO_Central"/>
</dbReference>
<dbReference type="GO" id="GO:0000122">
    <property type="term" value="P:negative regulation of transcription by RNA polymerase II"/>
    <property type="evidence" value="ECO:0007669"/>
    <property type="project" value="Ensembl"/>
</dbReference>
<dbReference type="GO" id="GO:0015671">
    <property type="term" value="P:oxygen transport"/>
    <property type="evidence" value="ECO:0000314"/>
    <property type="project" value="ComplexPortal"/>
</dbReference>
<dbReference type="CDD" id="cd08927">
    <property type="entry name" value="Hb-alpha-like"/>
    <property type="match status" value="1"/>
</dbReference>
<dbReference type="FunFam" id="1.10.490.10:FF:000002">
    <property type="entry name" value="Hemoglobin subunit alpha"/>
    <property type="match status" value="1"/>
</dbReference>
<dbReference type="Gene3D" id="1.10.490.10">
    <property type="entry name" value="Globins"/>
    <property type="match status" value="1"/>
</dbReference>
<dbReference type="InterPro" id="IPR000971">
    <property type="entry name" value="Globin"/>
</dbReference>
<dbReference type="InterPro" id="IPR009050">
    <property type="entry name" value="Globin-like_sf"/>
</dbReference>
<dbReference type="InterPro" id="IPR012292">
    <property type="entry name" value="Globin/Proto"/>
</dbReference>
<dbReference type="InterPro" id="IPR002338">
    <property type="entry name" value="Hemoglobin_a-typ"/>
</dbReference>
<dbReference type="InterPro" id="IPR050056">
    <property type="entry name" value="Hemoglobin_oxygen_transport"/>
</dbReference>
<dbReference type="InterPro" id="IPR002340">
    <property type="entry name" value="Hemoglobin_zeta"/>
</dbReference>
<dbReference type="PANTHER" id="PTHR11442">
    <property type="entry name" value="HEMOGLOBIN FAMILY MEMBER"/>
    <property type="match status" value="1"/>
</dbReference>
<dbReference type="PANTHER" id="PTHR11442:SF41">
    <property type="entry name" value="HEMOGLOBIN SUBUNIT ZETA"/>
    <property type="match status" value="1"/>
</dbReference>
<dbReference type="Pfam" id="PF00042">
    <property type="entry name" value="Globin"/>
    <property type="match status" value="1"/>
</dbReference>
<dbReference type="PRINTS" id="PR00612">
    <property type="entry name" value="ALPHAHAEM"/>
</dbReference>
<dbReference type="PRINTS" id="PR00816">
    <property type="entry name" value="ZETAHAEM"/>
</dbReference>
<dbReference type="SUPFAM" id="SSF46458">
    <property type="entry name" value="Globin-like"/>
    <property type="match status" value="1"/>
</dbReference>
<dbReference type="PROSITE" id="PS01033">
    <property type="entry name" value="GLOBIN"/>
    <property type="match status" value="1"/>
</dbReference>
<reference key="1">
    <citation type="journal article" date="1982" name="Cell">
        <title>The structure of the human zeta-globin gene and a closely linked, nearly identical pseudogene.</title>
        <authorList>
            <person name="Proudfoot N.J."/>
            <person name="Gil A."/>
            <person name="Maniatis T."/>
        </authorList>
    </citation>
    <scope>NUCLEOTIDE SEQUENCE [GENOMIC DNA]</scope>
</reference>
<reference key="2">
    <citation type="journal article" date="1982" name="DNA">
        <title>Cloning and nucleotide sequence analysis of human embryonic zeta-globin cDNA.</title>
        <authorList>
            <person name="Cohen-Solal M."/>
            <person name="Authier B."/>
            <person name="Deriel J.K."/>
            <person name="Murnane M.J."/>
            <person name="Forget B.G."/>
        </authorList>
    </citation>
    <scope>NUCLEOTIDE SEQUENCE [MRNA]</scope>
</reference>
<reference key="3">
    <citation type="journal article" date="1997" name="Nat. Genet.">
        <title>The relationship between chromosome structure and function at a human telomeric region.</title>
        <authorList>
            <person name="Flint J."/>
            <person name="Thomas K."/>
            <person name="Micklem G."/>
            <person name="Raynham H."/>
            <person name="Clark K."/>
            <person name="Doggett N.A."/>
            <person name="King A."/>
            <person name="Higgs D.R."/>
        </authorList>
    </citation>
    <scope>NUCLEOTIDE SEQUENCE [GENOMIC DNA]</scope>
</reference>
<reference key="4">
    <citation type="submission" date="2004-06" db="EMBL/GenBank/DDBJ databases">
        <title>Cloning of human full open reading frames in Gateway(TM) system entry vector (pDONR201).</title>
        <authorList>
            <person name="Ebert L."/>
            <person name="Schick M."/>
            <person name="Neubert P."/>
            <person name="Schatten R."/>
            <person name="Henze S."/>
            <person name="Korn B."/>
        </authorList>
    </citation>
    <scope>NUCLEOTIDE SEQUENCE [LARGE SCALE MRNA]</scope>
</reference>
<reference key="5">
    <citation type="journal article" date="2001" name="Hum. Mol. Genet.">
        <title>Sequence, structure and pathology of the fully annotated terminal 2 Mb of the short arm of human chromosome 16.</title>
        <authorList>
            <person name="Daniels R.J."/>
            <person name="Peden J.F."/>
            <person name="Lloyd C."/>
            <person name="Horsley S.W."/>
            <person name="Clark K."/>
            <person name="Tufarelli C."/>
            <person name="Kearney L."/>
            <person name="Buckle V.J."/>
            <person name="Doggett N.A."/>
            <person name="Flint J."/>
            <person name="Higgs D.R."/>
        </authorList>
    </citation>
    <scope>NUCLEOTIDE SEQUENCE [LARGE SCALE GENOMIC DNA]</scope>
</reference>
<reference key="6">
    <citation type="submission" date="2005-09" db="EMBL/GenBank/DDBJ databases">
        <authorList>
            <person name="Mural R.J."/>
            <person name="Istrail S."/>
            <person name="Sutton G.G."/>
            <person name="Florea L."/>
            <person name="Halpern A.L."/>
            <person name="Mobarry C.M."/>
            <person name="Lippert R."/>
            <person name="Walenz B."/>
            <person name="Shatkay H."/>
            <person name="Dew I."/>
            <person name="Miller J.R."/>
            <person name="Flanigan M.J."/>
            <person name="Edwards N.J."/>
            <person name="Bolanos R."/>
            <person name="Fasulo D."/>
            <person name="Halldorsson B.V."/>
            <person name="Hannenhalli S."/>
            <person name="Turner R."/>
            <person name="Yooseph S."/>
            <person name="Lu F."/>
            <person name="Nusskern D.R."/>
            <person name="Shue B.C."/>
            <person name="Zheng X.H."/>
            <person name="Zhong F."/>
            <person name="Delcher A.L."/>
            <person name="Huson D.H."/>
            <person name="Kravitz S.A."/>
            <person name="Mouchard L."/>
            <person name="Reinert K."/>
            <person name="Remington K.A."/>
            <person name="Clark A.G."/>
            <person name="Waterman M.S."/>
            <person name="Eichler E.E."/>
            <person name="Adams M.D."/>
            <person name="Hunkapiller M.W."/>
            <person name="Myers E.W."/>
            <person name="Venter J.C."/>
        </authorList>
    </citation>
    <scope>NUCLEOTIDE SEQUENCE [LARGE SCALE GENOMIC DNA]</scope>
</reference>
<reference key="7">
    <citation type="journal article" date="2004" name="Genome Res.">
        <title>The status, quality, and expansion of the NIH full-length cDNA project: the Mammalian Gene Collection (MGC).</title>
        <authorList>
            <consortium name="The MGC Project Team"/>
        </authorList>
    </citation>
    <scope>NUCLEOTIDE SEQUENCE [LARGE SCALE MRNA]</scope>
    <source>
        <tissue>Pancreas</tissue>
        <tissue>Spleen</tissue>
    </source>
</reference>
<reference key="8">
    <citation type="journal article" date="1981" name="Hoppe-Seyler's Z. Physiol. Chem.">
        <title>Human embryonic haemoglobins. The primary structure of the zeta chains.</title>
        <authorList>
            <person name="Aschauer H."/>
            <person name="Sanguansermsri T."/>
            <person name="Braunitzer G."/>
        </authorList>
    </citation>
    <scope>PROTEIN SEQUENCE OF 2-142</scope>
    <scope>DEVELOPMENTAL STAGE</scope>
</reference>
<reference key="9">
    <citation type="journal article" date="1981" name="Proc. Natl. Acad. Sci. U.S.A.">
        <title>Structure of the zeta chain of human embryonic hemoglobin.</title>
        <authorList>
            <person name="Clegg J.B."/>
            <person name="Gagnon J."/>
        </authorList>
    </citation>
    <scope>PROTEIN SEQUENCE OF 2-142</scope>
    <scope>DEVELOPMENTAL STAGE</scope>
    <scope>SUBUNIT</scope>
    <scope>TISSUE SPECIFICITY</scope>
</reference>
<reference key="10">
    <citation type="journal article" date="1981" name="Hoppe-Seyler's Z. Physiol. Chem.">
        <title>Human embryonic haemoglobins. Ac-Ser-Leu-Thr-is the N-terminal sequence of the zeta-chains.</title>
        <authorList>
            <person name="Aschauer H."/>
            <person name="Schaefer W."/>
            <person name="Sanguansermsri T."/>
            <person name="Braunitzer G."/>
        </authorList>
    </citation>
    <scope>ACETYLATION AT SER-2</scope>
</reference>
<reference key="11">
    <citation type="journal article" date="1984" name="J. Biol. Chem.">
        <title>Human hemoglobin Portland II (zeta 2 beta 2). Isolation and characterization of Portland hemoglobin components and their constituent globin chains.</title>
        <authorList>
            <person name="Randhawa Z.I."/>
            <person name="Jones R.T."/>
            <person name="Lie-Injo L.E."/>
        </authorList>
    </citation>
    <scope>SUBUNIT</scope>
    <scope>DEVELOPMENTAL STAGE</scope>
    <scope>TISSUE SPECIFICITY</scope>
</reference>
<reference key="12">
    <citation type="journal article" date="1991" name="J. Chromatogr. B">
        <title>Quantities of adult, fetal and embryonic globin chains in the blood of eighteen- to twenty-week-old human fetuses.</title>
        <authorList>
            <person name="Kutlar F."/>
            <person name="Moscoso H."/>
            <person name="Kiefer C.R."/>
            <person name="Garver F.A."/>
            <person name="Beksac S."/>
            <person name="Onderoglu L."/>
            <person name="Gurgey A."/>
            <person name="Altay C."/>
            <person name="Huisman T.H."/>
        </authorList>
    </citation>
    <scope>DEVELOPMENTAL STAGE</scope>
</reference>
<reference key="13">
    <citation type="journal article" date="2010" name="Prenat. Diagn.">
        <title>Haemoglobin level, proportion of haemoglobin Bart's and haemoglobin Portland in fetuses affected by homozygous alpha0-thalassemia from 12 to 40 weeks' gestation.</title>
        <authorList>
            <person name="Li T.K."/>
            <person name="Leung K.Y."/>
            <person name="Lam Y.H."/>
            <person name="Tang M.H."/>
            <person name="Chan V."/>
        </authorList>
    </citation>
    <scope>SUBUNIT</scope>
    <scope>DEVELOPMENTAL STAGE</scope>
</reference>
<reference key="14">
    <citation type="journal article" date="2011" name="BMC Syst. Biol.">
        <title>Initial characterization of the human central proteome.</title>
        <authorList>
            <person name="Burkard T.R."/>
            <person name="Planyavsky M."/>
            <person name="Kaupe I."/>
            <person name="Breitwieser F.P."/>
            <person name="Buerckstuemmer T."/>
            <person name="Bennett K.L."/>
            <person name="Superti-Furga G."/>
            <person name="Colinge J."/>
        </authorList>
    </citation>
    <scope>IDENTIFICATION BY MASS SPECTROMETRY [LARGE SCALE ANALYSIS]</scope>
</reference>
<reference key="15">
    <citation type="journal article" date="2013" name="J. Proteome Res.">
        <title>Toward a comprehensive characterization of a human cancer cell phosphoproteome.</title>
        <authorList>
            <person name="Zhou H."/>
            <person name="Di Palma S."/>
            <person name="Preisinger C."/>
            <person name="Peng M."/>
            <person name="Polat A.N."/>
            <person name="Heck A.J."/>
            <person name="Mohammed S."/>
        </authorList>
    </citation>
    <scope>PHOSPHORYLATION [LARGE SCALE ANALYSIS] AT THR-29; SER-53; SER-73 AND SER-82</scope>
    <scope>IDENTIFICATION BY MASS SPECTROMETRY [LARGE SCALE ANALYSIS]</scope>
    <source>
        <tissue>Erythroleukemia</tissue>
    </source>
</reference>
<reference key="16">
    <citation type="journal article" date="2001" name="Biochemistry">
        <title>The role of beta chains in the control of the hemoglobin oxygen binding function: chimeric human/mouse proteins, structure, and function.</title>
        <authorList>
            <person name="Kidd R.D."/>
            <person name="Russell J.E."/>
            <person name="Watmough N.J."/>
            <person name="Baker E.N."/>
            <person name="Brittain T."/>
        </authorList>
    </citation>
    <scope>X-RAY CRYSTALLOGRAPHY (2.1 ANGSTROMS) IN COMPLEX WITH HEME AND MOUSE HBB</scope>
    <scope>CLEAVAGE OF INITIATOR METHIONINE</scope>
    <scope>ACETYLATION AT SER-2</scope>
    <scope>SUBUNIT</scope>
</reference>
<reference key="17">
    <citation type="journal article" date="2013" name="Acta Crystallogr. D">
        <title>Structure of fully liganded Hb zeta2beta2s trapped in a tense conformation.</title>
        <authorList>
            <person name="Safo M.K."/>
            <person name="Ko T.P."/>
            <person name="Abdulmalik O."/>
            <person name="He Z."/>
            <person name="Wang A.H."/>
            <person name="Schreiter E.R."/>
            <person name="Russell J.E."/>
        </authorList>
    </citation>
    <scope>X-RAY CRYSTALLOGRAPHY (1.95 ANGSTROMS) IN COMPLEX WITH HEME; CARBON MONOXIDE AND HBB</scope>
    <scope>SUBUNIT</scope>
</reference>
<keyword id="KW-0002">3D-structure</keyword>
<keyword id="KW-0007">Acetylation</keyword>
<keyword id="KW-0903">Direct protein sequencing</keyword>
<keyword id="KW-0349">Heme</keyword>
<keyword id="KW-0408">Iron</keyword>
<keyword id="KW-0479">Metal-binding</keyword>
<keyword id="KW-0561">Oxygen transport</keyword>
<keyword id="KW-0597">Phosphoprotein</keyword>
<keyword id="KW-1267">Proteomics identification</keyword>
<keyword id="KW-1185">Reference proteome</keyword>
<keyword id="KW-0813">Transport</keyword>
<comment type="function">
    <text>The zeta chain is an alpha-type chain of mammalian embryonic hemoglobin.</text>
</comment>
<comment type="subunit">
    <text evidence="2 4 5 6 9">Heterotetramer of two zeta chains and two epsilon chains in early embryonic hemoglobin Gower-1; two zeta chains and two gamma chains in fetal hemoglobin Portland-1. Heterotetramer of two zeta chains and two beta chains in hemoglobin Portland-2, detected in fetuses and neonates with homozygous alpha-thalassemia.</text>
</comment>
<comment type="interaction">
    <interactant intactId="EBI-719843">
        <id>P02008</id>
    </interactant>
    <interactant intactId="EBI-3866279">
        <id>Q9BWT7</id>
        <label>CARD10</label>
    </interactant>
    <organismsDiffer>false</organismsDiffer>
    <experiments>3</experiments>
</comment>
<comment type="interaction">
    <interactant intactId="EBI-719843">
        <id>P02008</id>
    </interactant>
    <interactant intactId="EBI-748961">
        <id>O95273</id>
        <label>CCNDBP1</label>
    </interactant>
    <organismsDiffer>false</organismsDiffer>
    <experiments>3</experiments>
</comment>
<comment type="interaction">
    <interactant intactId="EBI-719843">
        <id>P02008</id>
    </interactant>
    <interactant intactId="EBI-3867333">
        <id>A8MQ03</id>
        <label>CYSRT1</label>
    </interactant>
    <organismsDiffer>false</organismsDiffer>
    <experiments>3</experiments>
</comment>
<comment type="interaction">
    <interactant intactId="EBI-719843">
        <id>P02008</id>
    </interactant>
    <interactant intactId="EBI-10174653">
        <id>Q8NF50-2</id>
        <label>DOCK8</label>
    </interactant>
    <organismsDiffer>false</organismsDiffer>
    <experiments>3</experiments>
</comment>
<comment type="interaction">
    <interactant intactId="EBI-719843">
        <id>P02008</id>
    </interactant>
    <interactant intactId="EBI-5916454">
        <id>A6NEM1</id>
        <label>GOLGA6L9</label>
    </interactant>
    <organismsDiffer>false</organismsDiffer>
    <experiments>3</experiments>
</comment>
<comment type="interaction">
    <interactant intactId="EBI-719843">
        <id>P02008</id>
    </interactant>
    <interactant intactId="EBI-715554">
        <id>P68871</id>
        <label>HBB</label>
    </interactant>
    <organismsDiffer>false</organismsDiffer>
    <experiments>7</experiments>
</comment>
<comment type="interaction">
    <interactant intactId="EBI-719843">
        <id>P02008</id>
    </interactant>
    <interactant intactId="EBI-6152722">
        <id>P02042</id>
        <label>HBD</label>
    </interactant>
    <organismsDiffer>false</organismsDiffer>
    <experiments>8</experiments>
</comment>
<comment type="interaction">
    <interactant intactId="EBI-719843">
        <id>P02008</id>
    </interactant>
    <interactant intactId="EBI-6190240">
        <id>P02100</id>
        <label>HBE1</label>
    </interactant>
    <organismsDiffer>false</organismsDiffer>
    <experiments>6</experiments>
</comment>
<comment type="interaction">
    <interactant intactId="EBI-719843">
        <id>P02008</id>
    </interactant>
    <interactant intactId="EBI-12805802">
        <id>Q6B0K9</id>
        <label>HBM</label>
    </interactant>
    <organismsDiffer>false</organismsDiffer>
    <experiments>3</experiments>
</comment>
<comment type="interaction">
    <interactant intactId="EBI-719843">
        <id>P02008</id>
    </interactant>
    <interactant intactId="EBI-10193656">
        <id>P09105</id>
        <label>HBQ1</label>
    </interactant>
    <organismsDiffer>false</organismsDiffer>
    <experiments>3</experiments>
</comment>
<comment type="interaction">
    <interactant intactId="EBI-719843">
        <id>P02008</id>
    </interactant>
    <interactant intactId="EBI-7060731">
        <id>P61978-2</id>
        <label>HNRNPK</label>
    </interactant>
    <organismsDiffer>false</organismsDiffer>
    <experiments>3</experiments>
</comment>
<comment type="interaction">
    <interactant intactId="EBI-719843">
        <id>P02008</id>
    </interactant>
    <interactant intactId="EBI-742808">
        <id>Q5VWX1</id>
        <label>KHDRBS2</label>
    </interactant>
    <organismsDiffer>false</organismsDiffer>
    <experiments>4</experiments>
</comment>
<comment type="interaction">
    <interactant intactId="EBI-719843">
        <id>P02008</id>
    </interactant>
    <interactant intactId="EBI-722504">
        <id>O75525</id>
        <label>KHDRBS3</label>
    </interactant>
    <organismsDiffer>false</organismsDiffer>
    <experiments>3</experiments>
</comment>
<comment type="interaction">
    <interactant intactId="EBI-719843">
        <id>P02008</id>
    </interactant>
    <interactant intactId="EBI-948001">
        <id>Q15323</id>
        <label>KRT31</label>
    </interactant>
    <organismsDiffer>false</organismsDiffer>
    <experiments>3</experiments>
</comment>
<comment type="interaction">
    <interactant intactId="EBI-719843">
        <id>P02008</id>
    </interactant>
    <interactant intactId="EBI-10171697">
        <id>Q6A162</id>
        <label>KRT40</label>
    </interactant>
    <organismsDiffer>false</organismsDiffer>
    <experiments>3</experiments>
</comment>
<comment type="interaction">
    <interactant intactId="EBI-719843">
        <id>P02008</id>
    </interactant>
    <interactant intactId="EBI-10172290">
        <id>P60409</id>
        <label>KRTAP10-7</label>
    </interactant>
    <organismsDiffer>false</organismsDiffer>
    <experiments>3</experiments>
</comment>
<comment type="interaction">
    <interactant intactId="EBI-719843">
        <id>P02008</id>
    </interactant>
    <interactant intactId="EBI-10172052">
        <id>P60411</id>
        <label>KRTAP10-9</label>
    </interactant>
    <organismsDiffer>false</organismsDiffer>
    <experiments>3</experiments>
</comment>
<comment type="interaction">
    <interactant intactId="EBI-719843">
        <id>P02008</id>
    </interactant>
    <interactant intactId="EBI-11522433">
        <id>Q5JR59-3</id>
        <label>MTUS2</label>
    </interactant>
    <organismsDiffer>false</organismsDiffer>
    <experiments>3</experiments>
</comment>
<comment type="interaction">
    <interactant intactId="EBI-719843">
        <id>P02008</id>
    </interactant>
    <interactant intactId="EBI-945833">
        <id>Q7Z3S9</id>
        <label>NOTCH2NLA</label>
    </interactant>
    <organismsDiffer>false</organismsDiffer>
    <experiments>4</experiments>
</comment>
<comment type="interaction">
    <interactant intactId="EBI-719843">
        <id>P02008</id>
    </interactant>
    <interactant intactId="EBI-22310682">
        <id>P0DPK4</id>
        <label>NOTCH2NLC</label>
    </interactant>
    <organismsDiffer>false</organismsDiffer>
    <experiments>3</experiments>
</comment>
<comment type="interaction">
    <interactant intactId="EBI-719843">
        <id>P02008</id>
    </interactant>
    <interactant intactId="EBI-741158">
        <id>Q96HA8</id>
        <label>NTAQ1</label>
    </interactant>
    <organismsDiffer>false</organismsDiffer>
    <experiments>3</experiments>
</comment>
<comment type="interaction">
    <interactant intactId="EBI-719843">
        <id>P02008</id>
    </interactant>
    <interactant intactId="EBI-11994018">
        <id>P0DJD3-2</id>
        <label>RBMY1A1</label>
    </interactant>
    <organismsDiffer>false</organismsDiffer>
    <experiments>3</experiments>
</comment>
<comment type="tissue specificity">
    <text evidence="6 9">Detected in fetal erythrocytes (at protein level).</text>
</comment>
<comment type="developmental stage">
    <text evidence="3 4 6 8 9">Detected in the yolk sac of the early embryo and in erythrocytes from fetal umbilical cord blood. Detected at low levels after 10 weeks of gestation. Hemoglobin Portland levels are increased in fetuses with homozygous alpha-thalassemia, but it constitutes only a minor proportion of total hemoglobin and its levels decrease steadily after 10 weeks of gestation. Hemoglobin Portland-2 is detected in blood from still-born neoneates with homozygous alpha-thalassemia (at protein level).</text>
</comment>
<comment type="similarity">
    <text evidence="1">Belongs to the globin family.</text>
</comment>
<protein>
    <recommendedName>
        <fullName>Hemoglobin subunit zeta</fullName>
    </recommendedName>
    <alternativeName>
        <fullName>HBAZ</fullName>
    </alternativeName>
    <alternativeName>
        <fullName>Hemoglobin zeta chain</fullName>
    </alternativeName>
    <alternativeName>
        <fullName>Zeta-globin</fullName>
    </alternativeName>
</protein>
<name>HBAZ_HUMAN</name>
<gene>
    <name type="primary">HBZ</name>
    <name type="synonym">HBZ2</name>
</gene>
<organism>
    <name type="scientific">Homo sapiens</name>
    <name type="common">Human</name>
    <dbReference type="NCBI Taxonomy" id="9606"/>
    <lineage>
        <taxon>Eukaryota</taxon>
        <taxon>Metazoa</taxon>
        <taxon>Chordata</taxon>
        <taxon>Craniata</taxon>
        <taxon>Vertebrata</taxon>
        <taxon>Euteleostomi</taxon>
        <taxon>Mammalia</taxon>
        <taxon>Eutheria</taxon>
        <taxon>Euarchontoglires</taxon>
        <taxon>Primates</taxon>
        <taxon>Haplorrhini</taxon>
        <taxon>Catarrhini</taxon>
        <taxon>Hominidae</taxon>
        <taxon>Homo</taxon>
    </lineage>
</organism>
<feature type="initiator methionine" description="Removed" evidence="2 6 7 8">
    <location>
        <position position="1"/>
    </location>
</feature>
<feature type="chain" id="PRO_0000052851" description="Hemoglobin subunit zeta">
    <location>
        <begin position="2"/>
        <end position="142"/>
    </location>
</feature>
<feature type="domain" description="Globin" evidence="1">
    <location>
        <begin position="2"/>
        <end position="142"/>
    </location>
</feature>
<feature type="binding site" description="distal binding residue">
    <location>
        <position position="59"/>
    </location>
    <ligand>
        <name>heme b</name>
        <dbReference type="ChEBI" id="CHEBI:60344"/>
    </ligand>
    <ligandPart>
        <name>Fe</name>
        <dbReference type="ChEBI" id="CHEBI:18248"/>
    </ligandPart>
</feature>
<feature type="binding site" description="proximal binding residue">
    <location>
        <position position="88"/>
    </location>
    <ligand>
        <name>heme b</name>
        <dbReference type="ChEBI" id="CHEBI:60344"/>
    </ligand>
    <ligandPart>
        <name>Fe</name>
        <dbReference type="ChEBI" id="CHEBI:18248"/>
    </ligandPart>
</feature>
<feature type="modified residue" description="N-acetylserine" evidence="2 7">
    <location>
        <position position="2"/>
    </location>
</feature>
<feature type="modified residue" description="Phosphothreonine" evidence="10">
    <location>
        <position position="29"/>
    </location>
</feature>
<feature type="modified residue" description="Phosphoserine" evidence="10">
    <location>
        <position position="53"/>
    </location>
</feature>
<feature type="modified residue" description="Phosphoserine" evidence="10">
    <location>
        <position position="73"/>
    </location>
</feature>
<feature type="modified residue" description="Phosphoserine" evidence="10">
    <location>
        <position position="82"/>
    </location>
</feature>
<feature type="helix" evidence="12">
    <location>
        <begin position="5"/>
        <end position="19"/>
    </location>
</feature>
<feature type="helix" evidence="12">
    <location>
        <begin position="22"/>
        <end position="36"/>
    </location>
</feature>
<feature type="helix" evidence="12">
    <location>
        <begin position="38"/>
        <end position="43"/>
    </location>
</feature>
<feature type="helix" evidence="12">
    <location>
        <begin position="54"/>
        <end position="72"/>
    </location>
</feature>
<feature type="helix" evidence="12">
    <location>
        <begin position="74"/>
        <end position="76"/>
    </location>
</feature>
<feature type="helix" evidence="12">
    <location>
        <begin position="77"/>
        <end position="80"/>
    </location>
</feature>
<feature type="helix" evidence="12">
    <location>
        <begin position="82"/>
        <end position="89"/>
    </location>
</feature>
<feature type="turn" evidence="12">
    <location>
        <begin position="90"/>
        <end position="92"/>
    </location>
</feature>
<feature type="helix" evidence="12">
    <location>
        <begin position="97"/>
        <end position="113"/>
    </location>
</feature>
<feature type="turn" evidence="12">
    <location>
        <begin position="115"/>
        <end position="117"/>
    </location>
</feature>
<feature type="helix" evidence="12">
    <location>
        <begin position="120"/>
        <end position="137"/>
    </location>
</feature>
<feature type="helix" evidence="11">
    <location>
        <begin position="139"/>
        <end position="141"/>
    </location>
</feature>
<accession>P02008</accession>
<accession>Q6IBF6</accession>
<evidence type="ECO:0000255" key="1">
    <source>
        <dbReference type="PROSITE-ProRule" id="PRU00238"/>
    </source>
</evidence>
<evidence type="ECO:0000269" key="2">
    <source>
    </source>
</evidence>
<evidence type="ECO:0000269" key="3">
    <source>
    </source>
</evidence>
<evidence type="ECO:0000269" key="4">
    <source>
    </source>
</evidence>
<evidence type="ECO:0000269" key="5">
    <source>
    </source>
</evidence>
<evidence type="ECO:0000269" key="6">
    <source>
    </source>
</evidence>
<evidence type="ECO:0000269" key="7">
    <source>
    </source>
</evidence>
<evidence type="ECO:0000269" key="8">
    <source>
    </source>
</evidence>
<evidence type="ECO:0000269" key="9">
    <source>
    </source>
</evidence>
<evidence type="ECO:0007744" key="10">
    <source>
    </source>
</evidence>
<evidence type="ECO:0007829" key="11">
    <source>
        <dbReference type="PDB" id="1JEB"/>
    </source>
</evidence>
<evidence type="ECO:0007829" key="12">
    <source>
        <dbReference type="PDB" id="3W4U"/>
    </source>
</evidence>
<sequence length="142" mass="15637">MSLTKTERTIIVSMWAKISTQADTIGTETLERLFLSHPQTKTYFPHFDLHPGSAQLRAHGSKVVAAVGDAVKSIDDIGGALSKLSELHAYILRVDPVNFKLLSHCLLVTLAARFPADFTAEAHAAWDKFLSVVSSVLTEKYR</sequence>
<proteinExistence type="evidence at protein level"/>